<comment type="similarity">
    <text evidence="1">Belongs to the bacterial ribosomal protein bL35 family.</text>
</comment>
<keyword id="KW-1185">Reference proteome</keyword>
<keyword id="KW-0687">Ribonucleoprotein</keyword>
<keyword id="KW-0689">Ribosomal protein</keyword>
<sequence length="65" mass="7289">MPKIKTVRGAAKRFKKTGKGGFKHKHANLRHILTKKATKRKRHLRPKAMVSKGDLGLVIACLPYA</sequence>
<name>RL35_ECO55</name>
<evidence type="ECO:0000255" key="1">
    <source>
        <dbReference type="HAMAP-Rule" id="MF_00514"/>
    </source>
</evidence>
<evidence type="ECO:0000256" key="2">
    <source>
        <dbReference type="SAM" id="MobiDB-lite"/>
    </source>
</evidence>
<evidence type="ECO:0000305" key="3"/>
<dbReference type="EMBL" id="CU928145">
    <property type="protein sequence ID" value="CAU97743.1"/>
    <property type="molecule type" value="Genomic_DNA"/>
</dbReference>
<dbReference type="RefSeq" id="WP_001124225.1">
    <property type="nucleotide sequence ID" value="NZ_CP028304.1"/>
</dbReference>
<dbReference type="SMR" id="B7L6J0"/>
<dbReference type="GeneID" id="97601348"/>
<dbReference type="KEGG" id="eck:EC55989_1884"/>
<dbReference type="HOGENOM" id="CLU_169643_1_1_6"/>
<dbReference type="Proteomes" id="UP000000746">
    <property type="component" value="Chromosome"/>
</dbReference>
<dbReference type="GO" id="GO:0022625">
    <property type="term" value="C:cytosolic large ribosomal subunit"/>
    <property type="evidence" value="ECO:0007669"/>
    <property type="project" value="TreeGrafter"/>
</dbReference>
<dbReference type="GO" id="GO:0003735">
    <property type="term" value="F:structural constituent of ribosome"/>
    <property type="evidence" value="ECO:0007669"/>
    <property type="project" value="InterPro"/>
</dbReference>
<dbReference type="GO" id="GO:0006412">
    <property type="term" value="P:translation"/>
    <property type="evidence" value="ECO:0007669"/>
    <property type="project" value="UniProtKB-UniRule"/>
</dbReference>
<dbReference type="FunFam" id="4.10.410.60:FF:000001">
    <property type="entry name" value="50S ribosomal protein L35"/>
    <property type="match status" value="1"/>
</dbReference>
<dbReference type="Gene3D" id="4.10.410.60">
    <property type="match status" value="1"/>
</dbReference>
<dbReference type="HAMAP" id="MF_00514">
    <property type="entry name" value="Ribosomal_bL35"/>
    <property type="match status" value="1"/>
</dbReference>
<dbReference type="InterPro" id="IPR001706">
    <property type="entry name" value="Ribosomal_bL35"/>
</dbReference>
<dbReference type="InterPro" id="IPR021137">
    <property type="entry name" value="Ribosomal_bL35-like"/>
</dbReference>
<dbReference type="InterPro" id="IPR018265">
    <property type="entry name" value="Ribosomal_bL35_CS"/>
</dbReference>
<dbReference type="InterPro" id="IPR037229">
    <property type="entry name" value="Ribosomal_bL35_sf"/>
</dbReference>
<dbReference type="NCBIfam" id="TIGR00001">
    <property type="entry name" value="rpmI_bact"/>
    <property type="match status" value="1"/>
</dbReference>
<dbReference type="PANTHER" id="PTHR33343">
    <property type="entry name" value="54S RIBOSOMAL PROTEIN BL35M"/>
    <property type="match status" value="1"/>
</dbReference>
<dbReference type="PANTHER" id="PTHR33343:SF1">
    <property type="entry name" value="LARGE RIBOSOMAL SUBUNIT PROTEIN BL35M"/>
    <property type="match status" value="1"/>
</dbReference>
<dbReference type="Pfam" id="PF01632">
    <property type="entry name" value="Ribosomal_L35p"/>
    <property type="match status" value="1"/>
</dbReference>
<dbReference type="PRINTS" id="PR00064">
    <property type="entry name" value="RIBOSOMALL35"/>
</dbReference>
<dbReference type="SUPFAM" id="SSF143034">
    <property type="entry name" value="L35p-like"/>
    <property type="match status" value="1"/>
</dbReference>
<dbReference type="PROSITE" id="PS00936">
    <property type="entry name" value="RIBOSOMAL_L35"/>
    <property type="match status" value="1"/>
</dbReference>
<accession>B7L6J0</accession>
<reference key="1">
    <citation type="journal article" date="2009" name="PLoS Genet.">
        <title>Organised genome dynamics in the Escherichia coli species results in highly diverse adaptive paths.</title>
        <authorList>
            <person name="Touchon M."/>
            <person name="Hoede C."/>
            <person name="Tenaillon O."/>
            <person name="Barbe V."/>
            <person name="Baeriswyl S."/>
            <person name="Bidet P."/>
            <person name="Bingen E."/>
            <person name="Bonacorsi S."/>
            <person name="Bouchier C."/>
            <person name="Bouvet O."/>
            <person name="Calteau A."/>
            <person name="Chiapello H."/>
            <person name="Clermont O."/>
            <person name="Cruveiller S."/>
            <person name="Danchin A."/>
            <person name="Diard M."/>
            <person name="Dossat C."/>
            <person name="Karoui M.E."/>
            <person name="Frapy E."/>
            <person name="Garry L."/>
            <person name="Ghigo J.M."/>
            <person name="Gilles A.M."/>
            <person name="Johnson J."/>
            <person name="Le Bouguenec C."/>
            <person name="Lescat M."/>
            <person name="Mangenot S."/>
            <person name="Martinez-Jehanne V."/>
            <person name="Matic I."/>
            <person name="Nassif X."/>
            <person name="Oztas S."/>
            <person name="Petit M.A."/>
            <person name="Pichon C."/>
            <person name="Rouy Z."/>
            <person name="Ruf C.S."/>
            <person name="Schneider D."/>
            <person name="Tourret J."/>
            <person name="Vacherie B."/>
            <person name="Vallenet D."/>
            <person name="Medigue C."/>
            <person name="Rocha E.P.C."/>
            <person name="Denamur E."/>
        </authorList>
    </citation>
    <scope>NUCLEOTIDE SEQUENCE [LARGE SCALE GENOMIC DNA]</scope>
    <source>
        <strain>55989 / EAEC</strain>
    </source>
</reference>
<organism>
    <name type="scientific">Escherichia coli (strain 55989 / EAEC)</name>
    <dbReference type="NCBI Taxonomy" id="585055"/>
    <lineage>
        <taxon>Bacteria</taxon>
        <taxon>Pseudomonadati</taxon>
        <taxon>Pseudomonadota</taxon>
        <taxon>Gammaproteobacteria</taxon>
        <taxon>Enterobacterales</taxon>
        <taxon>Enterobacteriaceae</taxon>
        <taxon>Escherichia</taxon>
    </lineage>
</organism>
<feature type="chain" id="PRO_1000194072" description="Large ribosomal subunit protein bL35">
    <location>
        <begin position="1"/>
        <end position="65"/>
    </location>
</feature>
<feature type="region of interest" description="Disordered" evidence="2">
    <location>
        <begin position="1"/>
        <end position="22"/>
    </location>
</feature>
<feature type="compositionally biased region" description="Basic residues" evidence="2">
    <location>
        <begin position="10"/>
        <end position="22"/>
    </location>
</feature>
<protein>
    <recommendedName>
        <fullName evidence="1">Large ribosomal subunit protein bL35</fullName>
    </recommendedName>
    <alternativeName>
        <fullName evidence="3">50S ribosomal protein L35</fullName>
    </alternativeName>
</protein>
<proteinExistence type="inferred from homology"/>
<gene>
    <name evidence="1" type="primary">rpmI</name>
    <name type="ordered locus">EC55989_1884</name>
</gene>